<protein>
    <recommendedName>
        <fullName evidence="4">Guanine-specific ADP-ribosyl transferase</fullName>
        <ecNumber evidence="2 3">2.4.2.-</ecNumber>
    </recommendedName>
    <alternativeName>
        <fullName evidence="4">NAD(+):guanine-N2-ADP-D-ribosyltransferase</fullName>
    </alternativeName>
    <alternativeName>
        <fullName evidence="4">S.coelicolor ADP-ribosylating protein</fullName>
        <shortName evidence="4">ScARP</shortName>
    </alternativeName>
</protein>
<feature type="signal peptide" evidence="1 5">
    <location>
        <begin position="1"/>
        <end position="42"/>
    </location>
</feature>
<feature type="chain" id="PRO_5030176823" description="Guanine-specific ADP-ribosyl transferase" evidence="1">
    <location>
        <begin position="43"/>
        <end position="204"/>
    </location>
</feature>
<feature type="short sequence motif" description="PN (phosphate-nicotinamide) loop" evidence="6">
    <location>
        <begin position="132"/>
        <end position="136"/>
    </location>
</feature>
<feature type="binding site" evidence="3 9">
    <location>
        <begin position="81"/>
        <end position="85"/>
    </location>
    <ligand>
        <name>NADH</name>
        <dbReference type="ChEBI" id="CHEBI:57945"/>
    </ligand>
</feature>
<feature type="binding site" evidence="3 9">
    <location>
        <position position="98"/>
    </location>
    <ligand>
        <name>NADH</name>
        <dbReference type="ChEBI" id="CHEBI:57945"/>
    </ligand>
</feature>
<feature type="binding site" evidence="3 9">
    <location>
        <begin position="111"/>
        <end position="114"/>
    </location>
    <ligand>
        <name>GDP</name>
        <dbReference type="ChEBI" id="CHEBI:58189"/>
    </ligand>
</feature>
<feature type="binding site" evidence="3 9">
    <location>
        <begin position="132"/>
        <end position="134"/>
    </location>
    <ligand>
        <name>GDP</name>
        <dbReference type="ChEBI" id="CHEBI:58189"/>
    </ligand>
</feature>
<feature type="binding site" evidence="3 9">
    <location>
        <position position="159"/>
    </location>
    <ligand>
        <name>GDP</name>
        <dbReference type="ChEBI" id="CHEBI:58189"/>
    </ligand>
</feature>
<feature type="binding site" evidence="3 9">
    <location>
        <position position="162"/>
    </location>
    <ligand>
        <name>GDP</name>
        <dbReference type="ChEBI" id="CHEBI:58189"/>
    </ligand>
</feature>
<feature type="disulfide bond" evidence="3 8 9">
    <location>
        <begin position="46"/>
        <end position="76"/>
    </location>
</feature>
<feature type="disulfide bond" evidence="3 8 9">
    <location>
        <begin position="180"/>
        <end position="194"/>
    </location>
</feature>
<feature type="mutagenesis site" description="No ADP-ribosylation of GDP." evidence="3">
    <original>W</original>
    <variation>A</variation>
    <location>
        <position position="159"/>
    </location>
</feature>
<feature type="mutagenesis site" description="No ADP-ribosylation of GDP." evidence="3">
    <original>Q</original>
    <variation>E</variation>
    <variation>N</variation>
    <variation>S</variation>
    <location>
        <position position="162"/>
    </location>
</feature>
<feature type="mutagenesis site" description="No ADP-ribosylation of guanosine." evidence="2">
    <original>E</original>
    <variation>D</variation>
    <location>
        <position position="164"/>
    </location>
</feature>
<feature type="turn" evidence="10">
    <location>
        <begin position="52"/>
        <end position="55"/>
    </location>
</feature>
<feature type="helix" evidence="10">
    <location>
        <begin position="63"/>
        <end position="65"/>
    </location>
</feature>
<feature type="strand" evidence="10">
    <location>
        <begin position="79"/>
        <end position="85"/>
    </location>
</feature>
<feature type="helix" evidence="10">
    <location>
        <begin position="87"/>
        <end position="93"/>
    </location>
</feature>
<feature type="turn" evidence="10">
    <location>
        <begin position="100"/>
        <end position="102"/>
    </location>
</feature>
<feature type="helix" evidence="10">
    <location>
        <begin position="107"/>
        <end position="112"/>
    </location>
</feature>
<feature type="strand" evidence="10">
    <location>
        <begin position="118"/>
        <end position="124"/>
    </location>
</feature>
<feature type="helix" evidence="10">
    <location>
        <begin position="126"/>
        <end position="130"/>
    </location>
</feature>
<feature type="turn" evidence="10">
    <location>
        <begin position="131"/>
        <end position="134"/>
    </location>
</feature>
<feature type="strand" evidence="10">
    <location>
        <begin position="137"/>
        <end position="141"/>
    </location>
</feature>
<feature type="helix" evidence="10">
    <location>
        <begin position="149"/>
        <end position="153"/>
    </location>
</feature>
<feature type="strand" evidence="11">
    <location>
        <begin position="155"/>
        <end position="157"/>
    </location>
</feature>
<feature type="helix" evidence="10">
    <location>
        <begin position="160"/>
        <end position="162"/>
    </location>
</feature>
<feature type="strand" evidence="10">
    <location>
        <begin position="164"/>
        <end position="168"/>
    </location>
</feature>
<feature type="helix" evidence="10">
    <location>
        <begin position="173"/>
        <end position="175"/>
    </location>
</feature>
<feature type="strand" evidence="10">
    <location>
        <begin position="176"/>
        <end position="183"/>
    </location>
</feature>
<feature type="turn" evidence="10">
    <location>
        <begin position="184"/>
        <end position="187"/>
    </location>
</feature>
<feature type="helix" evidence="10">
    <location>
        <begin position="191"/>
        <end position="193"/>
    </location>
</feature>
<sequence>MITTSLRRRTAAAVLSLSAVLATTAATAPGAAPAPSAAPAKAAPACPQFDDRTKAAADRGVDVDRITPEPVWRTTCGTLYRSDSRGPQVVFEEGFHAKDVQNGQYDVEKYVLVNQPSPYVSTSYDHDLYKTWYKSGYNYYVDAPGGIDVNKTIGDTHKWADQVEVAFPGGIQRKYIIGVCPVDRQTKTEIMSDCESNPHYQPWH</sequence>
<organism>
    <name type="scientific">Streptomyces coelicolor (strain ATCC BAA-471 / A3(2) / M145)</name>
    <dbReference type="NCBI Taxonomy" id="100226"/>
    <lineage>
        <taxon>Bacteria</taxon>
        <taxon>Bacillati</taxon>
        <taxon>Actinomycetota</taxon>
        <taxon>Actinomycetes</taxon>
        <taxon>Kitasatosporales</taxon>
        <taxon>Streptomycetaceae</taxon>
        <taxon>Streptomyces</taxon>
        <taxon>Streptomyces albidoflavus group</taxon>
    </lineage>
</organism>
<dbReference type="EC" id="2.4.2.-" evidence="2 3"/>
<dbReference type="EMBL" id="AL939123">
    <property type="protein sequence ID" value="CAB76015.1"/>
    <property type="molecule type" value="Genomic_DNA"/>
</dbReference>
<dbReference type="RefSeq" id="NP_629598.1">
    <property type="nucleotide sequence ID" value="NC_003888.3"/>
</dbReference>
<dbReference type="RefSeq" id="WP_011030264.1">
    <property type="nucleotide sequence ID" value="NZ_VNID01000011.1"/>
</dbReference>
<dbReference type="PDB" id="5ZJ4">
    <property type="method" value="X-ray"/>
    <property type="resolution" value="1.50 A"/>
    <property type="chains" value="A/B/C/D=43-204"/>
</dbReference>
<dbReference type="PDB" id="5ZJ5">
    <property type="method" value="X-ray"/>
    <property type="resolution" value="1.57 A"/>
    <property type="chains" value="A/B=43-204"/>
</dbReference>
<dbReference type="PDBsum" id="5ZJ4"/>
<dbReference type="PDBsum" id="5ZJ5"/>
<dbReference type="SMR" id="Q9L1E4"/>
<dbReference type="STRING" id="100226.gene:17763113"/>
<dbReference type="PaxDb" id="100226-SCO5461"/>
<dbReference type="KEGG" id="sco:SCO5461"/>
<dbReference type="PATRIC" id="fig|100226.15.peg.5545"/>
<dbReference type="eggNOG" id="COG1396">
    <property type="taxonomic scope" value="Bacteria"/>
</dbReference>
<dbReference type="HOGENOM" id="CLU_097942_0_0_11"/>
<dbReference type="InParanoid" id="Q9L1E4"/>
<dbReference type="OrthoDB" id="4223934at2"/>
<dbReference type="Proteomes" id="UP000001973">
    <property type="component" value="Chromosome"/>
</dbReference>
<dbReference type="GO" id="GO:0005576">
    <property type="term" value="C:extracellular region"/>
    <property type="evidence" value="ECO:0007669"/>
    <property type="project" value="UniProtKB-SubCell"/>
</dbReference>
<dbReference type="GO" id="GO:0016757">
    <property type="term" value="F:glycosyltransferase activity"/>
    <property type="evidence" value="ECO:0007669"/>
    <property type="project" value="UniProtKB-KW"/>
</dbReference>
<dbReference type="GO" id="GO:0016779">
    <property type="term" value="F:nucleotidyltransferase activity"/>
    <property type="evidence" value="ECO:0007669"/>
    <property type="project" value="UniProtKB-KW"/>
</dbReference>
<dbReference type="Gene3D" id="3.90.210.10">
    <property type="entry name" value="Heat-Labile Enterotoxin, subunit A"/>
    <property type="match status" value="1"/>
</dbReference>
<dbReference type="InterPro" id="IPR054695">
    <property type="entry name" value="Pierisin-like_dom"/>
</dbReference>
<dbReference type="InterPro" id="IPR048221">
    <property type="entry name" value="ScARP-like"/>
</dbReference>
<dbReference type="NCBIfam" id="NF041482">
    <property type="entry name" value="ADPrt_Strmyces"/>
    <property type="match status" value="1"/>
</dbReference>
<dbReference type="Pfam" id="PF22596">
    <property type="entry name" value="Scabin-like"/>
    <property type="match status" value="1"/>
</dbReference>
<dbReference type="SUPFAM" id="SSF56399">
    <property type="entry name" value="ADP-ribosylation"/>
    <property type="match status" value="1"/>
</dbReference>
<evidence type="ECO:0000255" key="1"/>
<evidence type="ECO:0000269" key="2">
    <source>
    </source>
</evidence>
<evidence type="ECO:0000269" key="3">
    <source>
    </source>
</evidence>
<evidence type="ECO:0000303" key="4">
    <source>
    </source>
</evidence>
<evidence type="ECO:0000305" key="5">
    <source>
    </source>
</evidence>
<evidence type="ECO:0000305" key="6">
    <source>
    </source>
</evidence>
<evidence type="ECO:0000312" key="7">
    <source>
        <dbReference type="EMBL" id="CAB76015.1"/>
    </source>
</evidence>
<evidence type="ECO:0007744" key="8">
    <source>
        <dbReference type="PDB" id="5ZJ4"/>
    </source>
</evidence>
<evidence type="ECO:0007744" key="9">
    <source>
        <dbReference type="PDB" id="5ZJ5"/>
    </source>
</evidence>
<evidence type="ECO:0007829" key="10">
    <source>
        <dbReference type="PDB" id="5ZJ4"/>
    </source>
</evidence>
<evidence type="ECO:0007829" key="11">
    <source>
        <dbReference type="PDB" id="5ZJ5"/>
    </source>
</evidence>
<keyword id="KW-0002">3D-structure</keyword>
<keyword id="KW-1015">Disulfide bond</keyword>
<keyword id="KW-0328">Glycosyltransferase</keyword>
<keyword id="KW-0548">Nucleotidyltransferase</keyword>
<keyword id="KW-1185">Reference proteome</keyword>
<keyword id="KW-0964">Secreted</keyword>
<keyword id="KW-0732">Signal</keyword>
<keyword id="KW-0808">Transferase</keyword>
<comment type="function">
    <text evidence="2 3">ADP-ribosylates the N2 amino group of guanosine, deoxyguanosine, GMP, dGMP, cGMP, GTP and dGTP; oligo-guanosine, oligo-deoxyguanosine and tRNA are ADP-ribosylated less efficiently, while dsDNA is a very poor substrate (PubMed:23212047). Also acts on GDP (PubMed:30072382).</text>
</comment>
<comment type="catalytic activity">
    <reaction evidence="2">
        <text>guanosine + NAD(+) = N(2)-(ADP-D-ribosyl)-guanosine + nicotinamide + H(+)</text>
        <dbReference type="Rhea" id="RHEA:71643"/>
        <dbReference type="ChEBI" id="CHEBI:15378"/>
        <dbReference type="ChEBI" id="CHEBI:16750"/>
        <dbReference type="ChEBI" id="CHEBI:17154"/>
        <dbReference type="ChEBI" id="CHEBI:57540"/>
        <dbReference type="ChEBI" id="CHEBI:142714"/>
    </reaction>
</comment>
<comment type="catalytic activity">
    <reaction evidence="2">
        <text>a 2'-deoxyguanosine in DNA + NAD(+) = an N(2)-(ADP-L-ribosyl)-2'-deoxyguanosine in DNA + nicotinamide + H(+)</text>
        <dbReference type="Rhea" id="RHEA:71807"/>
        <dbReference type="Rhea" id="RHEA-COMP:11367"/>
        <dbReference type="Rhea" id="RHEA-COMP:18062"/>
        <dbReference type="ChEBI" id="CHEBI:15378"/>
        <dbReference type="ChEBI" id="CHEBI:17154"/>
        <dbReference type="ChEBI" id="CHEBI:57540"/>
        <dbReference type="ChEBI" id="CHEBI:85445"/>
        <dbReference type="ChEBI" id="CHEBI:142722"/>
    </reaction>
</comment>
<comment type="catalytic activity">
    <reaction evidence="2">
        <text>2'-deoxyguanosine + NAD(+) = N(2)-(ADP-D-ribosyl)-2'-deoxyguanosine + nicotinamide + H(+)</text>
        <dbReference type="Rhea" id="RHEA:71879"/>
        <dbReference type="ChEBI" id="CHEBI:15378"/>
        <dbReference type="ChEBI" id="CHEBI:17154"/>
        <dbReference type="ChEBI" id="CHEBI:17172"/>
        <dbReference type="ChEBI" id="CHEBI:57540"/>
        <dbReference type="ChEBI" id="CHEBI:142715"/>
    </reaction>
</comment>
<comment type="catalytic activity">
    <reaction evidence="2">
        <text>GMP + NAD(+) = N(2)-(ADP-D-ribosyl)-GMP + nicotinamide + H(+)</text>
        <dbReference type="Rhea" id="RHEA:71883"/>
        <dbReference type="ChEBI" id="CHEBI:15378"/>
        <dbReference type="ChEBI" id="CHEBI:17154"/>
        <dbReference type="ChEBI" id="CHEBI:57540"/>
        <dbReference type="ChEBI" id="CHEBI:58115"/>
        <dbReference type="ChEBI" id="CHEBI:142717"/>
    </reaction>
</comment>
<comment type="catalytic activity">
    <reaction evidence="2">
        <text>GTP + NAD(+) = N(2)-(ADP-D-ribosyl)-GTP + nicotinamide + H(+)</text>
        <dbReference type="Rhea" id="RHEA:71887"/>
        <dbReference type="ChEBI" id="CHEBI:15378"/>
        <dbReference type="ChEBI" id="CHEBI:17154"/>
        <dbReference type="ChEBI" id="CHEBI:37565"/>
        <dbReference type="ChEBI" id="CHEBI:57540"/>
        <dbReference type="ChEBI" id="CHEBI:142719"/>
    </reaction>
</comment>
<comment type="catalytic activity">
    <reaction evidence="2">
        <text>dGMP + NAD(+) = N(2)-(ADP-D-ribosyl)-dGMP + nicotinamide + H(+)</text>
        <dbReference type="Rhea" id="RHEA:71891"/>
        <dbReference type="ChEBI" id="CHEBI:15378"/>
        <dbReference type="ChEBI" id="CHEBI:17154"/>
        <dbReference type="ChEBI" id="CHEBI:57540"/>
        <dbReference type="ChEBI" id="CHEBI:57673"/>
        <dbReference type="ChEBI" id="CHEBI:142718"/>
    </reaction>
</comment>
<comment type="catalytic activity">
    <reaction evidence="2">
        <text>dGTP + NAD(+) = N(2)-(ADP-D-ribosyl)-dGTP + nicotinamide + H(+)</text>
        <dbReference type="Rhea" id="RHEA:71895"/>
        <dbReference type="ChEBI" id="CHEBI:15378"/>
        <dbReference type="ChEBI" id="CHEBI:17154"/>
        <dbReference type="ChEBI" id="CHEBI:57540"/>
        <dbReference type="ChEBI" id="CHEBI:61429"/>
        <dbReference type="ChEBI" id="CHEBI:142720"/>
    </reaction>
</comment>
<comment type="catalytic activity">
    <reaction evidence="2">
        <text>3',5'-cyclic GMP + NAD(+) = N(2)-(ADP-D-ribosyl)-3',5'-cyclic GMP + nicotinamide + H(+)</text>
        <dbReference type="Rhea" id="RHEA:71899"/>
        <dbReference type="ChEBI" id="CHEBI:15378"/>
        <dbReference type="ChEBI" id="CHEBI:17154"/>
        <dbReference type="ChEBI" id="CHEBI:57540"/>
        <dbReference type="ChEBI" id="CHEBI:57746"/>
        <dbReference type="ChEBI" id="CHEBI:142721"/>
    </reaction>
</comment>
<comment type="catalytic activity">
    <reaction evidence="2">
        <text>guanine + NAD(+) = N(2)-(ADP-D-ribosyl)-guanine + nicotinamide + H(+)</text>
        <dbReference type="Rhea" id="RHEA:71903"/>
        <dbReference type="ChEBI" id="CHEBI:15378"/>
        <dbReference type="ChEBI" id="CHEBI:16235"/>
        <dbReference type="ChEBI" id="CHEBI:17154"/>
        <dbReference type="ChEBI" id="CHEBI:57540"/>
        <dbReference type="ChEBI" id="CHEBI:142716"/>
    </reaction>
</comment>
<comment type="catalytic activity">
    <reaction evidence="3">
        <text>GDP + NAD(+) = N(2)-(ADP-D-ribosyl)-GDP + nicotinamide + H(+)</text>
        <dbReference type="Rhea" id="RHEA:71907"/>
        <dbReference type="ChEBI" id="CHEBI:15378"/>
        <dbReference type="ChEBI" id="CHEBI:17154"/>
        <dbReference type="ChEBI" id="CHEBI:57540"/>
        <dbReference type="ChEBI" id="CHEBI:58189"/>
        <dbReference type="ChEBI" id="CHEBI:142713"/>
    </reaction>
</comment>
<comment type="activity regulation">
    <text evidence="3">Inhibited by NADH.</text>
</comment>
<comment type="biophysicochemical properties">
    <kinetics>
        <KM evidence="2">31 uM for guanosine</KM>
        <KM evidence="2">52 uM for deoxyguanosine</KM>
        <KM evidence="2">174 uM for guanine</KM>
        <KM evidence="2">110 uM for NAD(+)</KM>
        <text evidence="2">kcat is 325 sec(-1) for guanosine, 278 sec(-1) for deoxyguanosine, 63 sec(-1) for guanine, 512 sec(-1) for dGMP, 460 sec(-1) for GTP, 379 sec(-1) for dGTP, 204 sec(-1) for GMP, 148 sec(-1) for cGMP, between 0.14 and 0.26 sec(-1) for oligo(G) oligo(dG) and tRNA and 0.001 sec(-1) for dsDNA.</text>
    </kinetics>
    <phDependence>
        <text evidence="2">Optimum pH is 6-7.</text>
    </phDependence>
    <temperatureDependence>
        <text evidence="2">Optimum temperature is 30 degrees Celsius.</text>
    </temperatureDependence>
</comment>
<comment type="subunit">
    <text evidence="6">Monomer.</text>
</comment>
<comment type="subcellular location">
    <subcellularLocation>
        <location evidence="2">Secreted</location>
    </subcellularLocation>
</comment>
<comment type="domain">
    <text evidence="3">The PN loop (phosphate-nicotinamide, residues 132-136) moves dramatically upon GDP-binding.</text>
</comment>
<comment type="miscellaneous">
    <text evidence="6">As this is a secreted protein it will have to find its substrates extracellularly, probably from surrounding dead or damaged cells. As many bacteria use guanosine derivatives to respond to environmental changes, this enzyme may disregulate these responses.</text>
</comment>
<comment type="similarity">
    <text evidence="6">Belongs to the pierisin ADP-ribosyltransferase family.</text>
</comment>
<accession>Q9L1E4</accession>
<reference evidence="7" key="1">
    <citation type="journal article" date="2002" name="Nature">
        <title>Complete genome sequence of the model actinomycete Streptomyces coelicolor A3(2).</title>
        <authorList>
            <person name="Bentley S.D."/>
            <person name="Chater K.F."/>
            <person name="Cerdeno-Tarraga A.-M."/>
            <person name="Challis G.L."/>
            <person name="Thomson N.R."/>
            <person name="James K.D."/>
            <person name="Harris D.E."/>
            <person name="Quail M.A."/>
            <person name="Kieser H."/>
            <person name="Harper D."/>
            <person name="Bateman A."/>
            <person name="Brown S."/>
            <person name="Chandra G."/>
            <person name="Chen C.W."/>
            <person name="Collins M."/>
            <person name="Cronin A."/>
            <person name="Fraser A."/>
            <person name="Goble A."/>
            <person name="Hidalgo J."/>
            <person name="Hornsby T."/>
            <person name="Howarth S."/>
            <person name="Huang C.-H."/>
            <person name="Kieser T."/>
            <person name="Larke L."/>
            <person name="Murphy L.D."/>
            <person name="Oliver K."/>
            <person name="O'Neil S."/>
            <person name="Rabbinowitsch E."/>
            <person name="Rajandream M.A."/>
            <person name="Rutherford K.M."/>
            <person name="Rutter S."/>
            <person name="Seeger K."/>
            <person name="Saunders D."/>
            <person name="Sharp S."/>
            <person name="Squares R."/>
            <person name="Squares S."/>
            <person name="Taylor K."/>
            <person name="Warren T."/>
            <person name="Wietzorrek A."/>
            <person name="Woodward J.R."/>
            <person name="Barrell B.G."/>
            <person name="Parkhill J."/>
            <person name="Hopwood D.A."/>
        </authorList>
    </citation>
    <scope>NUCLEOTIDE SEQUENCE [LARGE SCALE GENOMIC DNA]</scope>
    <source>
        <strain>ATCC BAA-471 / A3(2) / M145</strain>
    </source>
</reference>
<reference key="2">
    <citation type="journal article" date="2013" name="Toxicon">
        <title>ADP-ribosylation of guanosine by SCO5461 protein secreted from Streptomyces coelicolor.</title>
        <authorList>
            <person name="Nakano T."/>
            <person name="Matsushima-Hibiya Y."/>
            <person name="Yamamoto M."/>
            <person name="Takahashi-Nakaguchi A."/>
            <person name="Fukuda H."/>
            <person name="Ono M."/>
            <person name="Takamura-Enya T."/>
            <person name="Kinashi H."/>
            <person name="Totsuka Y."/>
        </authorList>
    </citation>
    <scope>FUNCTION</scope>
    <scope>CATALYTIC ACTIVITY</scope>
    <scope>BIOPHYSICOCHEMICAL PROPERTIES</scope>
    <scope>SUBCELLULAR LOCATION</scope>
    <scope>MUTAGENESIS OF GLU-164</scope>
    <source>
        <strain>ATCC BAA-471 / A3(2) / M145</strain>
    </source>
</reference>
<reference evidence="8 9" key="3">
    <citation type="journal article" date="2018" name="J. Biol. Chem.">
        <title>Substrate N2 atom recognition mechanism in pierisin family DNA-targeting, guanine-specific ADP-ribosyltransferase ScARP.</title>
        <authorList>
            <person name="Yoshida T."/>
            <person name="Tsuge H."/>
        </authorList>
    </citation>
    <scope>X-RAY CRYSTALLOGRAPHY (1.50 ANGSTROMS) OF 43-204 WITH AND WITHOUT GDP AND NADH</scope>
    <scope>FUNCTION</scope>
    <scope>CATALYTIC ACTIVITY</scope>
    <scope>ACTIVITY REGULATION</scope>
    <scope>SUBUNIT</scope>
    <scope>DOMAIN</scope>
    <scope>DISULFIDE BONDS</scope>
    <scope>MUTAGENESIS OF TRP-159 AND GLN-162</scope>
    <source>
        <strain>ATCC BAA-471 / A3(2) / M145</strain>
    </source>
</reference>
<gene>
    <name evidence="7" type="ordered locus">SCO5461</name>
</gene>
<proteinExistence type="evidence at protein level"/>
<name>SCARP_STRCO</name>